<feature type="chain" id="PRO_0000289123" description="Leukocyte elastase inhibitor A">
    <location>
        <begin position="1"/>
        <end position="379"/>
    </location>
</feature>
<feature type="site" description="Reactive bond" evidence="1">
    <location>
        <begin position="344"/>
        <end position="345"/>
    </location>
</feature>
<feature type="modified residue" description="Phosphoserine" evidence="4">
    <location>
        <position position="300"/>
    </location>
</feature>
<proteinExistence type="evidence at protein level"/>
<gene>
    <name type="primary">Serpinb1a</name>
</gene>
<keyword id="KW-0963">Cytoplasm</keyword>
<keyword id="KW-0967">Endosome</keyword>
<keyword id="KW-0458">Lysosome</keyword>
<keyword id="KW-0597">Phosphoprotein</keyword>
<keyword id="KW-0646">Protease inhibitor</keyword>
<keyword id="KW-1185">Reference proteome</keyword>
<keyword id="KW-0964">Secreted</keyword>
<keyword id="KW-0722">Serine protease inhibitor</keyword>
<organism>
    <name type="scientific">Rattus norvegicus</name>
    <name type="common">Rat</name>
    <dbReference type="NCBI Taxonomy" id="10116"/>
    <lineage>
        <taxon>Eukaryota</taxon>
        <taxon>Metazoa</taxon>
        <taxon>Chordata</taxon>
        <taxon>Craniata</taxon>
        <taxon>Vertebrata</taxon>
        <taxon>Euteleostomi</taxon>
        <taxon>Mammalia</taxon>
        <taxon>Eutheria</taxon>
        <taxon>Euarchontoglires</taxon>
        <taxon>Glires</taxon>
        <taxon>Rodentia</taxon>
        <taxon>Myomorpha</taxon>
        <taxon>Muroidea</taxon>
        <taxon>Muridae</taxon>
        <taxon>Murinae</taxon>
        <taxon>Rattus</taxon>
    </lineage>
</organism>
<protein>
    <recommendedName>
        <fullName>Leukocyte elastase inhibitor A</fullName>
    </recommendedName>
    <alternativeName>
        <fullName>Serine protease inhibitor EIA</fullName>
    </alternativeName>
    <alternativeName>
        <fullName>Serpin B1a</fullName>
    </alternativeName>
</protein>
<sequence length="379" mass="42727">MEQLSSANSLFALELFHTLSESSPTGNIFFSPFSISSALAMVFLGTKGTTAAQLSKTFHFDSVEDVHSRFQSLNAEVSKRGASHTLKLANRLYGEKTYNFLPEFLTSTQKMYGADLAPVDFQHASEDARKEINQWVKGQTEGKIPELLAVGVVDSMTKLVLVNAIYFKGMWEEKFMKQDTTDAPFRLNKKNTKSVKMMYQKKKFFFGYISDLKCKVLEMPYQGGELSMVILLPEDIEDESTGLKKIEEQITLEKLREWTKRENLENIDVHVKLPRFKIEESYILNSNLGRLGLQDLFNSSKADLSGMSGSRDLFISKIVHKAFVEVNEEGTEAAAATAGIATFCMLLPEEEFTADHPFIFFIRHNPTANVLFLGRVCSP</sequence>
<comment type="function">
    <text evidence="1">Regulates the activity of the neutrophil proteases.</text>
</comment>
<comment type="subunit">
    <text evidence="1">Monomer.</text>
</comment>
<comment type="subcellular location">
    <subcellularLocation>
        <location evidence="2">Secreted</location>
    </subcellularLocation>
    <subcellularLocation>
        <location evidence="2">Cytoplasm</location>
    </subcellularLocation>
    <subcellularLocation>
        <location evidence="2">Cytolytic granule</location>
    </subcellularLocation>
    <subcellularLocation>
        <location evidence="2">Early endosome</location>
    </subcellularLocation>
</comment>
<comment type="similarity">
    <text evidence="3">Belongs to the serpin family. Ov-serpin subfamily.</text>
</comment>
<reference key="1">
    <citation type="journal article" date="2004" name="Genome Res.">
        <title>The status, quality, and expansion of the NIH full-length cDNA project: the Mammalian Gene Collection (MGC).</title>
        <authorList>
            <consortium name="The MGC Project Team"/>
        </authorList>
    </citation>
    <scope>NUCLEOTIDE SEQUENCE [LARGE SCALE MRNA]</scope>
    <source>
        <tissue>Thymus</tissue>
    </source>
</reference>
<reference key="2">
    <citation type="journal article" date="2012" name="Nat. Commun.">
        <title>Quantitative maps of protein phosphorylation sites across 14 different rat organs and tissues.</title>
        <authorList>
            <person name="Lundby A."/>
            <person name="Secher A."/>
            <person name="Lage K."/>
            <person name="Nordsborg N.B."/>
            <person name="Dmytriyev A."/>
            <person name="Lundby C."/>
            <person name="Olsen J.V."/>
        </authorList>
    </citation>
    <scope>PHOSPHORYLATION [LARGE SCALE ANALYSIS] AT SER-300</scope>
    <scope>IDENTIFICATION BY MASS SPECTROMETRY [LARGE SCALE ANALYSIS]</scope>
</reference>
<accession>Q4G075</accession>
<dbReference type="EMBL" id="BC098686">
    <property type="protein sequence ID" value="AAH98686.1"/>
    <property type="molecule type" value="mRNA"/>
</dbReference>
<dbReference type="RefSeq" id="NP_001026812.1">
    <property type="nucleotide sequence ID" value="NM_001031642.1"/>
</dbReference>
<dbReference type="SMR" id="Q4G075"/>
<dbReference type="FunCoup" id="Q4G075">
    <property type="interactions" value="1195"/>
</dbReference>
<dbReference type="STRING" id="10116.ENSRNOP00000056600"/>
<dbReference type="MEROPS" id="I04.049"/>
<dbReference type="iPTMnet" id="Q4G075"/>
<dbReference type="PhosphoSitePlus" id="Q4G075"/>
<dbReference type="jPOST" id="Q4G075"/>
<dbReference type="PaxDb" id="10116-ENSRNOP00000056600"/>
<dbReference type="Ensembl" id="ENSRNOT00000059854.4">
    <property type="protein sequence ID" value="ENSRNOP00000056600.2"/>
    <property type="gene ID" value="ENSRNOG00000016581.7"/>
</dbReference>
<dbReference type="GeneID" id="291091"/>
<dbReference type="KEGG" id="rno:291091"/>
<dbReference type="UCSC" id="RGD:1306203">
    <property type="organism name" value="rat"/>
</dbReference>
<dbReference type="AGR" id="RGD:1306203"/>
<dbReference type="CTD" id="66222"/>
<dbReference type="RGD" id="1306203">
    <property type="gene designation" value="Serpinb1a"/>
</dbReference>
<dbReference type="eggNOG" id="KOG2392">
    <property type="taxonomic scope" value="Eukaryota"/>
</dbReference>
<dbReference type="GeneTree" id="ENSGT00940000154573"/>
<dbReference type="HOGENOM" id="CLU_023330_0_2_1"/>
<dbReference type="InParanoid" id="Q4G075"/>
<dbReference type="OMA" id="YFNAAWA"/>
<dbReference type="OrthoDB" id="671595at2759"/>
<dbReference type="PhylomeDB" id="Q4G075"/>
<dbReference type="TreeFam" id="TF352619"/>
<dbReference type="Reactome" id="R-RNO-6798695">
    <property type="pathway name" value="Neutrophil degranulation"/>
</dbReference>
<dbReference type="PRO" id="PR:Q4G075"/>
<dbReference type="Proteomes" id="UP000002494">
    <property type="component" value="Chromosome 17"/>
</dbReference>
<dbReference type="Bgee" id="ENSRNOG00000016581">
    <property type="expression patterns" value="Expressed in duodenum and 20 other cell types or tissues"/>
</dbReference>
<dbReference type="GO" id="GO:0044194">
    <property type="term" value="C:cytolytic granule"/>
    <property type="evidence" value="ECO:0007669"/>
    <property type="project" value="UniProtKB-SubCell"/>
</dbReference>
<dbReference type="GO" id="GO:0005769">
    <property type="term" value="C:early endosome"/>
    <property type="evidence" value="ECO:0007669"/>
    <property type="project" value="UniProtKB-SubCell"/>
</dbReference>
<dbReference type="GO" id="GO:0005576">
    <property type="term" value="C:extracellular region"/>
    <property type="evidence" value="ECO:0000266"/>
    <property type="project" value="RGD"/>
</dbReference>
<dbReference type="GO" id="GO:0005615">
    <property type="term" value="C:extracellular space"/>
    <property type="evidence" value="ECO:0000318"/>
    <property type="project" value="GO_Central"/>
</dbReference>
<dbReference type="GO" id="GO:0030414">
    <property type="term" value="F:peptidase inhibitor activity"/>
    <property type="evidence" value="ECO:0000266"/>
    <property type="project" value="RGD"/>
</dbReference>
<dbReference type="GO" id="GO:0004867">
    <property type="term" value="F:serine-type endopeptidase inhibitor activity"/>
    <property type="evidence" value="ECO:0000266"/>
    <property type="project" value="RGD"/>
</dbReference>
<dbReference type="GO" id="GO:0019725">
    <property type="term" value="P:cellular homeostasis"/>
    <property type="evidence" value="ECO:0000266"/>
    <property type="project" value="RGD"/>
</dbReference>
<dbReference type="GO" id="GO:0006954">
    <property type="term" value="P:inflammatory response"/>
    <property type="evidence" value="ECO:0000266"/>
    <property type="project" value="RGD"/>
</dbReference>
<dbReference type="GO" id="GO:0030336">
    <property type="term" value="P:negative regulation of cell migration"/>
    <property type="evidence" value="ECO:0000266"/>
    <property type="project" value="RGD"/>
</dbReference>
<dbReference type="GO" id="GO:0032691">
    <property type="term" value="P:negative regulation of interleukin-1 beta production"/>
    <property type="evidence" value="ECO:0000266"/>
    <property type="project" value="RGD"/>
</dbReference>
<dbReference type="GO" id="GO:0045088">
    <property type="term" value="P:regulation of innate immune response"/>
    <property type="evidence" value="ECO:0000266"/>
    <property type="project" value="RGD"/>
</dbReference>
<dbReference type="GO" id="GO:0042176">
    <property type="term" value="P:regulation of protein catabolic process"/>
    <property type="evidence" value="ECO:0000266"/>
    <property type="project" value="RGD"/>
</dbReference>
<dbReference type="GO" id="GO:0044342">
    <property type="term" value="P:type B pancreatic cell proliferation"/>
    <property type="evidence" value="ECO:0000266"/>
    <property type="project" value="RGD"/>
</dbReference>
<dbReference type="CDD" id="cd19560">
    <property type="entry name" value="serpinB1_LEI"/>
    <property type="match status" value="1"/>
</dbReference>
<dbReference type="FunFam" id="3.30.497.10:FF:000004">
    <property type="entry name" value="Serpin family B member 1"/>
    <property type="match status" value="1"/>
</dbReference>
<dbReference type="FunFam" id="2.30.39.10:FF:000014">
    <property type="entry name" value="Serpin family B member 9"/>
    <property type="match status" value="1"/>
</dbReference>
<dbReference type="Gene3D" id="2.30.39.10">
    <property type="entry name" value="Alpha-1-antitrypsin, domain 1"/>
    <property type="match status" value="1"/>
</dbReference>
<dbReference type="Gene3D" id="3.30.497.10">
    <property type="entry name" value="Antithrombin, subunit I, domain 2"/>
    <property type="match status" value="1"/>
</dbReference>
<dbReference type="InterPro" id="IPR023795">
    <property type="entry name" value="Serpin_CS"/>
</dbReference>
<dbReference type="InterPro" id="IPR023796">
    <property type="entry name" value="Serpin_dom"/>
</dbReference>
<dbReference type="InterPro" id="IPR000215">
    <property type="entry name" value="Serpin_fam"/>
</dbReference>
<dbReference type="InterPro" id="IPR036186">
    <property type="entry name" value="Serpin_sf"/>
</dbReference>
<dbReference type="InterPro" id="IPR042178">
    <property type="entry name" value="Serpin_sf_1"/>
</dbReference>
<dbReference type="InterPro" id="IPR042185">
    <property type="entry name" value="Serpin_sf_2"/>
</dbReference>
<dbReference type="PANTHER" id="PTHR11461:SF180">
    <property type="entry name" value="LEUKOCYTE ELASTASE INHIBITOR"/>
    <property type="match status" value="1"/>
</dbReference>
<dbReference type="PANTHER" id="PTHR11461">
    <property type="entry name" value="SERINE PROTEASE INHIBITOR, SERPIN"/>
    <property type="match status" value="1"/>
</dbReference>
<dbReference type="Pfam" id="PF00079">
    <property type="entry name" value="Serpin"/>
    <property type="match status" value="1"/>
</dbReference>
<dbReference type="SMART" id="SM00093">
    <property type="entry name" value="SERPIN"/>
    <property type="match status" value="1"/>
</dbReference>
<dbReference type="SUPFAM" id="SSF56574">
    <property type="entry name" value="Serpins"/>
    <property type="match status" value="1"/>
</dbReference>
<dbReference type="PROSITE" id="PS00284">
    <property type="entry name" value="SERPIN"/>
    <property type="match status" value="1"/>
</dbReference>
<evidence type="ECO:0000250" key="1"/>
<evidence type="ECO:0000250" key="2">
    <source>
        <dbReference type="UniProtKB" id="P30740"/>
    </source>
</evidence>
<evidence type="ECO:0000305" key="3"/>
<evidence type="ECO:0007744" key="4">
    <source>
    </source>
</evidence>
<name>ILEUA_RAT</name>